<gene>
    <name evidence="2" type="primary">SLS2</name>
    <name type="ORF">Tb09.211.1020</name>
</gene>
<protein>
    <recommendedName>
        <fullName evidence="2">Phosphatidylethanolamine:ceramide ethanolaminephosphotransferase</fullName>
        <ecNumber evidence="2">2.7.8.-</ecNumber>
    </recommendedName>
    <alternativeName>
        <fullName evidence="2">Ethanolamine-phosphorylceramide synthase</fullName>
        <shortName evidence="2">EPC synthase</shortName>
    </alternativeName>
    <alternativeName>
        <fullName evidence="2">Sphingolipid synthase</fullName>
    </alternativeName>
</protein>
<organism>
    <name type="scientific">Trypanosoma brucei brucei (strain 927/4 GUTat10.1)</name>
    <dbReference type="NCBI Taxonomy" id="185431"/>
    <lineage>
        <taxon>Eukaryota</taxon>
        <taxon>Discoba</taxon>
        <taxon>Euglenozoa</taxon>
        <taxon>Kinetoplastea</taxon>
        <taxon>Metakinetoplastina</taxon>
        <taxon>Trypanosomatida</taxon>
        <taxon>Trypanosomatidae</taxon>
        <taxon>Trypanosoma</taxon>
    </lineage>
</organism>
<dbReference type="EC" id="2.7.8.-" evidence="2"/>
<dbReference type="EMBL" id="CM000207">
    <property type="protein sequence ID" value="EAN76916.1"/>
    <property type="status" value="ALT_INIT"/>
    <property type="molecule type" value="Genomic_DNA"/>
</dbReference>
<dbReference type="RefSeq" id="XP_827246.1">
    <property type="nucleotide sequence ID" value="XM_822153.1"/>
</dbReference>
<dbReference type="STRING" id="185431.Q38E54"/>
<dbReference type="GeneID" id="3660635"/>
<dbReference type="KEGG" id="tbr:Tb09.211.1020"/>
<dbReference type="InParanoid" id="Q38E54"/>
<dbReference type="OrthoDB" id="422827at2759"/>
<dbReference type="Proteomes" id="UP000008524">
    <property type="component" value="Chromosome 9"/>
</dbReference>
<dbReference type="GO" id="GO:0005789">
    <property type="term" value="C:endoplasmic reticulum membrane"/>
    <property type="evidence" value="ECO:0000318"/>
    <property type="project" value="GO_Central"/>
</dbReference>
<dbReference type="GO" id="GO:0000139">
    <property type="term" value="C:Golgi membrane"/>
    <property type="evidence" value="ECO:0000318"/>
    <property type="project" value="GO_Central"/>
</dbReference>
<dbReference type="GO" id="GO:0016020">
    <property type="term" value="C:membrane"/>
    <property type="evidence" value="ECO:0000247"/>
    <property type="project" value="GeneDB"/>
</dbReference>
<dbReference type="GO" id="GO:0005886">
    <property type="term" value="C:plasma membrane"/>
    <property type="evidence" value="ECO:0000318"/>
    <property type="project" value="GO_Central"/>
</dbReference>
<dbReference type="GO" id="GO:0047493">
    <property type="term" value="F:ceramide cholinephosphotransferase activity"/>
    <property type="evidence" value="ECO:0000318"/>
    <property type="project" value="GO_Central"/>
</dbReference>
<dbReference type="GO" id="GO:0016301">
    <property type="term" value="F:kinase activity"/>
    <property type="evidence" value="ECO:0007669"/>
    <property type="project" value="UniProtKB-KW"/>
</dbReference>
<dbReference type="GO" id="GO:0033188">
    <property type="term" value="F:sphingomyelin synthase activity"/>
    <property type="evidence" value="ECO:0000314"/>
    <property type="project" value="GeneDB"/>
</dbReference>
<dbReference type="GO" id="GO:0046513">
    <property type="term" value="P:ceramide biosynthetic process"/>
    <property type="evidence" value="ECO:0000318"/>
    <property type="project" value="GO_Central"/>
</dbReference>
<dbReference type="GO" id="GO:0046335">
    <property type="term" value="P:ethanolamine biosynthetic process"/>
    <property type="evidence" value="ECO:0000314"/>
    <property type="project" value="GeneDB"/>
</dbReference>
<dbReference type="InterPro" id="IPR045221">
    <property type="entry name" value="Sphingomyelin_synth-like"/>
</dbReference>
<dbReference type="InterPro" id="IPR025749">
    <property type="entry name" value="Sphingomyelin_synth-like_dom"/>
</dbReference>
<dbReference type="PANTHER" id="PTHR21290:SF25">
    <property type="entry name" value="SPHINGOMYELIN SYNTHASE-RELATED PROTEIN 1"/>
    <property type="match status" value="1"/>
</dbReference>
<dbReference type="PANTHER" id="PTHR21290">
    <property type="entry name" value="SPHINGOMYELIN SYNTHETASE"/>
    <property type="match status" value="1"/>
</dbReference>
<dbReference type="Pfam" id="PF14360">
    <property type="entry name" value="PAP2_C"/>
    <property type="match status" value="1"/>
</dbReference>
<evidence type="ECO:0000250" key="1"/>
<evidence type="ECO:0000250" key="2">
    <source>
        <dbReference type="UniProtKB" id="B3A0M0"/>
    </source>
</evidence>
<evidence type="ECO:0000255" key="3"/>
<evidence type="ECO:0000305" key="4"/>
<evidence type="ECO:0000312" key="5">
    <source>
        <dbReference type="EMBL" id="EAN76916.1"/>
    </source>
</evidence>
<evidence type="ECO:0000312" key="6">
    <source>
        <dbReference type="Proteomes" id="UP000008524"/>
    </source>
</evidence>
<comment type="function">
    <text evidence="1">Bidirectional lipid ethanolaminephosphotransferase capable of converting phosphatidylethanolamine (PE) and ceramide to ethanolamine-phosphorylceramide (EPC) and diacylglycerol (DAG) and vice versa. Direction is dependent on the relative concentrations of DAG and ceramide as phosphoethanolamine acceptors. Does not function strictly as a SM synthase. Essential for viability of the pathogenic bloodstream stage of this human protozoan parasite and, consequently, can be considered as potential drug target (By similarity).</text>
</comment>
<comment type="subcellular location">
    <subcellularLocation>
        <location evidence="3">Membrane</location>
        <topology evidence="3">Multi-pass membrane protein</topology>
    </subcellularLocation>
</comment>
<comment type="similarity">
    <text evidence="3">Belongs to the sphingomyelin synthase family.</text>
</comment>
<comment type="sequence caution" evidence="4">
    <conflict type="erroneous initiation">
        <sequence resource="EMBL-CDS" id="EAN76916"/>
    </conflict>
    <text>Truncated N-terminus.</text>
</comment>
<feature type="chain" id="PRO_0000413853" description="Phosphatidylethanolamine:ceramide ethanolaminephosphotransferase">
    <location>
        <begin position="1"/>
        <end position="323"/>
    </location>
</feature>
<feature type="topological domain" description="Cytoplasmic" evidence="3">
    <location>
        <begin position="1"/>
        <end position="26"/>
    </location>
</feature>
<feature type="transmembrane region" description="Helical" evidence="3">
    <location>
        <begin position="27"/>
        <end position="47"/>
    </location>
</feature>
<feature type="topological domain" description="Extracellular" evidence="3">
    <location>
        <begin position="48"/>
        <end position="73"/>
    </location>
</feature>
<feature type="transmembrane region" description="Helical" evidence="3">
    <location>
        <begin position="74"/>
        <end position="94"/>
    </location>
</feature>
<feature type="topological domain" description="Cytoplasmic" evidence="3">
    <location>
        <begin position="95"/>
        <end position="147"/>
    </location>
</feature>
<feature type="transmembrane region" description="Helical" evidence="3">
    <location>
        <begin position="148"/>
        <end position="168"/>
    </location>
</feature>
<feature type="topological domain" description="Extracellular" evidence="3">
    <location>
        <begin position="169"/>
        <end position="211"/>
    </location>
</feature>
<feature type="transmembrane region" description="Helical" evidence="3">
    <location>
        <begin position="212"/>
        <end position="232"/>
    </location>
</feature>
<feature type="topological domain" description="Cytoplasmic" evidence="3">
    <location>
        <position position="233"/>
    </location>
</feature>
<feature type="transmembrane region" description="Helical" evidence="3">
    <location>
        <begin position="234"/>
        <end position="254"/>
    </location>
</feature>
<feature type="topological domain" description="Extracellular" evidence="3">
    <location>
        <begin position="255"/>
        <end position="257"/>
    </location>
</feature>
<feature type="transmembrane region" description="Helical" evidence="3">
    <location>
        <begin position="258"/>
        <end position="278"/>
    </location>
</feature>
<feature type="topological domain" description="Cytoplasmic" evidence="3">
    <location>
        <begin position="279"/>
        <end position="323"/>
    </location>
</feature>
<feature type="active site" evidence="1">
    <location>
        <position position="210"/>
    </location>
</feature>
<feature type="active site" evidence="1">
    <location>
        <position position="253"/>
    </location>
</feature>
<feature type="active site" evidence="1">
    <location>
        <position position="257"/>
    </location>
</feature>
<reference evidence="5" key="1">
    <citation type="journal article" date="2005" name="Science">
        <title>The genome of the African trypanosome Trypanosoma brucei.</title>
        <authorList>
            <person name="Berriman M."/>
            <person name="Ghedin E."/>
            <person name="Hertz-Fowler C."/>
            <person name="Blandin G."/>
            <person name="Renauld H."/>
            <person name="Bartholomeu D.C."/>
            <person name="Lennard N.J."/>
            <person name="Caler E."/>
            <person name="Hamlin N.E."/>
            <person name="Haas B."/>
            <person name="Bohme U."/>
            <person name="Hannick L."/>
            <person name="Aslett M.A."/>
            <person name="Shallom J."/>
            <person name="Marcello L."/>
            <person name="Hou L."/>
            <person name="Wickstead B."/>
            <person name="Alsmark U.C.M."/>
            <person name="Arrowsmith C."/>
            <person name="Atkin R.J."/>
            <person name="Barron A.J."/>
            <person name="Bringaud F."/>
            <person name="Brooks K."/>
            <person name="Carrington M."/>
            <person name="Cherevach I."/>
            <person name="Chillingworth T.J."/>
            <person name="Churcher C."/>
            <person name="Clark L.N."/>
            <person name="Corton C.H."/>
            <person name="Cronin A."/>
            <person name="Davies R.M."/>
            <person name="Doggett J."/>
            <person name="Djikeng A."/>
            <person name="Feldblyum T."/>
            <person name="Field M.C."/>
            <person name="Fraser A."/>
            <person name="Goodhead I."/>
            <person name="Hance Z."/>
            <person name="Harper D."/>
            <person name="Harris B.R."/>
            <person name="Hauser H."/>
            <person name="Hostetler J."/>
            <person name="Ivens A."/>
            <person name="Jagels K."/>
            <person name="Johnson D."/>
            <person name="Johnson J."/>
            <person name="Jones K."/>
            <person name="Kerhornou A.X."/>
            <person name="Koo H."/>
            <person name="Larke N."/>
            <person name="Landfear S."/>
            <person name="Larkin C."/>
            <person name="Leech V."/>
            <person name="Line A."/>
            <person name="Lord A."/>
            <person name="Macleod A."/>
            <person name="Mooney P.J."/>
            <person name="Moule S."/>
            <person name="Martin D.M."/>
            <person name="Morgan G.W."/>
            <person name="Mungall K."/>
            <person name="Norbertczak H."/>
            <person name="Ormond D."/>
            <person name="Pai G."/>
            <person name="Peacock C.S."/>
            <person name="Peterson J."/>
            <person name="Quail M.A."/>
            <person name="Rabbinowitsch E."/>
            <person name="Rajandream M.A."/>
            <person name="Reitter C."/>
            <person name="Salzberg S.L."/>
            <person name="Sanders M."/>
            <person name="Schobel S."/>
            <person name="Sharp S."/>
            <person name="Simmonds M."/>
            <person name="Simpson A.J."/>
            <person name="Tallon L."/>
            <person name="Turner C.M."/>
            <person name="Tait A."/>
            <person name="Tivey A.R."/>
            <person name="Van Aken S."/>
            <person name="Walker D."/>
            <person name="Wanless D."/>
            <person name="Wang S."/>
            <person name="White B."/>
            <person name="White O."/>
            <person name="Whitehead S."/>
            <person name="Woodward J."/>
            <person name="Wortman J."/>
            <person name="Adams M.D."/>
            <person name="Embley T.M."/>
            <person name="Gull K."/>
            <person name="Ullu E."/>
            <person name="Barry J.D."/>
            <person name="Fairlamb A.H."/>
            <person name="Opperdoes F."/>
            <person name="Barrell B.G."/>
            <person name="Donelson J.E."/>
            <person name="Hall N."/>
            <person name="Fraser C.M."/>
            <person name="Melville S.E."/>
            <person name="El-Sayed N.M.A."/>
        </authorList>
    </citation>
    <scope>NUCLEOTIDE SEQUENCE [LARGE SCALE GENOMIC DNA]</scope>
    <source>
        <strain evidence="6">927/4 GUTat10.1</strain>
    </source>
</reference>
<proteinExistence type="inferred from homology"/>
<sequence length="323" mass="36519">MAVPPVEMYSGSFWNRMRKPLPLRTQVIRFTVVFVIVSFILAVALQITHERMPDPKVTKPLPDLGFEVLHKYPFLFSVADCCIGFLNILSVFTAFKLYLLHRHCVGSGEPELPCNIPGVSRFFLSVWLCKENCRIELRNVHTIAWIRFITSYALLLLSRSVIMVVTSLPNPDDLCQDPPKIENRVKDVILTVLTAGAGSIHCGDLMYSGHTVILTLHLMFHWIYGAMVHWSFRPVVTVVAIFGYYCIVASRFHYTDDVLVAIYLTIATFIAVGHNADGAPWQLQLFIRWLPCCGANSREVTEDGVPVAIVIKNEEMMNFEGKS</sequence>
<name>SLS2_TRYB2</name>
<accession>Q38E54</accession>
<keyword id="KW-0418">Kinase</keyword>
<keyword id="KW-0443">Lipid metabolism</keyword>
<keyword id="KW-0472">Membrane</keyword>
<keyword id="KW-1185">Reference proteome</keyword>
<keyword id="KW-0746">Sphingolipid metabolism</keyword>
<keyword id="KW-0808">Transferase</keyword>
<keyword id="KW-0812">Transmembrane</keyword>
<keyword id="KW-1133">Transmembrane helix</keyword>